<sequence>MLAATCNKIGSPSPSPSSLSDTSGSFGKGFHPWKRSSSTSSSCTLASGSLSGFSVGGSSRSANGSSSSSAAAAAAAAAAAAAAAALVSDSFSCGGSPGSSAFSLTSGGSGGSGGGGSSGSMSAASPFANEYSVFPVSGGSQEAAAAAAAAAAAAAAAASHHQPVFLSKVHASVDGLQSIYPRVGMAHPYESWFKPSHPGEVSAAAAGGASSWWEVGAGWIDVQSPGAGAALHPGALQGSLHSPLGGYGTDYSAAGLGHFSTGGGGGVGSGGGAAGTGSGGGGGGSHLLSPGGQHLMDGFKPVIGPGSYPDPSSSPLSAGSMLAPTGPLGGSPRSSARRYSGRATCDCPNCQEAERLGPAGASLRRKGLHSCHIPGCGKVYGKTSHLKAHLRWHTGERPFVCNWLFCGKRFTRSDELQRHLRTHTGEKRFACPVCNKRFMRSDHLSKHVKTHSVGGGSTGSTGPGSGSKKGSDTDSEHSPSTSPTCHSPDLLHPPDRNGLE</sequence>
<name>SP8_XENLA</name>
<keyword id="KW-0238">DNA-binding</keyword>
<keyword id="KW-0479">Metal-binding</keyword>
<keyword id="KW-0539">Nucleus</keyword>
<keyword id="KW-1185">Reference proteome</keyword>
<keyword id="KW-0677">Repeat</keyword>
<keyword id="KW-0804">Transcription</keyword>
<keyword id="KW-0805">Transcription regulation</keyword>
<keyword id="KW-0862">Zinc</keyword>
<keyword id="KW-0863">Zinc-finger</keyword>
<feature type="chain" id="PRO_0000395449" description="Transcription factor Sp8">
    <location>
        <begin position="1"/>
        <end position="500"/>
    </location>
</feature>
<feature type="zinc finger region" description="C2H2-type 1" evidence="3">
    <location>
        <begin position="369"/>
        <end position="393"/>
    </location>
</feature>
<feature type="zinc finger region" description="C2H2-type 2" evidence="3">
    <location>
        <begin position="399"/>
        <end position="423"/>
    </location>
</feature>
<feature type="zinc finger region" description="C2H2-type 3" evidence="3">
    <location>
        <begin position="429"/>
        <end position="451"/>
    </location>
</feature>
<feature type="region of interest" description="Disordered" evidence="4">
    <location>
        <begin position="1"/>
        <end position="46"/>
    </location>
</feature>
<feature type="region of interest" description="Disordered" evidence="4">
    <location>
        <begin position="304"/>
        <end position="337"/>
    </location>
</feature>
<feature type="region of interest" description="Disordered" evidence="4">
    <location>
        <begin position="445"/>
        <end position="500"/>
    </location>
</feature>
<feature type="short sequence motif" description="9aaTAD" evidence="2">
    <location>
        <begin position="210"/>
        <end position="218"/>
    </location>
</feature>
<feature type="compositionally biased region" description="Low complexity" evidence="4">
    <location>
        <begin position="10"/>
        <end position="25"/>
    </location>
</feature>
<feature type="compositionally biased region" description="Low complexity" evidence="4">
    <location>
        <begin position="36"/>
        <end position="46"/>
    </location>
</feature>
<feature type="compositionally biased region" description="Low complexity" evidence="4">
    <location>
        <begin position="305"/>
        <end position="317"/>
    </location>
</feature>
<feature type="compositionally biased region" description="Gly residues" evidence="4">
    <location>
        <begin position="453"/>
        <end position="467"/>
    </location>
</feature>
<feature type="compositionally biased region" description="Low complexity" evidence="4">
    <location>
        <begin position="478"/>
        <end position="488"/>
    </location>
</feature>
<organism>
    <name type="scientific">Xenopus laevis</name>
    <name type="common">African clawed frog</name>
    <dbReference type="NCBI Taxonomy" id="8355"/>
    <lineage>
        <taxon>Eukaryota</taxon>
        <taxon>Metazoa</taxon>
        <taxon>Chordata</taxon>
        <taxon>Craniata</taxon>
        <taxon>Vertebrata</taxon>
        <taxon>Euteleostomi</taxon>
        <taxon>Amphibia</taxon>
        <taxon>Batrachia</taxon>
        <taxon>Anura</taxon>
        <taxon>Pipoidea</taxon>
        <taxon>Pipidae</taxon>
        <taxon>Xenopodinae</taxon>
        <taxon>Xenopus</taxon>
        <taxon>Xenopus</taxon>
    </lineage>
</organism>
<proteinExistence type="evidence at transcript level"/>
<comment type="function">
    <text evidence="1">Transcription factor which plays a key role in limb development. Positively regulates FGF8 expression in the apical ectodermal ridge (AER) and contributes to limb outgrowth in embryos (By similarity).</text>
</comment>
<comment type="subcellular location">
    <subcellularLocation>
        <location evidence="5">Nucleus</location>
    </subcellularLocation>
</comment>
<comment type="domain">
    <text evidence="2">The 9aaTAD motif is a transactivation domain present in a large number of yeast and animal transcription factors.</text>
</comment>
<comment type="similarity">
    <text evidence="5">Belongs to the Sp1 C2H2-type zinc-finger protein family.</text>
</comment>
<accession>Q5XGT8</accession>
<evidence type="ECO:0000250" key="1"/>
<evidence type="ECO:0000250" key="2">
    <source>
        <dbReference type="UniProtKB" id="Q8IXZ3"/>
    </source>
</evidence>
<evidence type="ECO:0000255" key="3">
    <source>
        <dbReference type="PROSITE-ProRule" id="PRU00042"/>
    </source>
</evidence>
<evidence type="ECO:0000256" key="4">
    <source>
        <dbReference type="SAM" id="MobiDB-lite"/>
    </source>
</evidence>
<evidence type="ECO:0000305" key="5"/>
<reference key="1">
    <citation type="submission" date="2004-10" db="EMBL/GenBank/DDBJ databases">
        <authorList>
            <consortium name="NIH - Xenopus Gene Collection (XGC) project"/>
        </authorList>
    </citation>
    <scope>NUCLEOTIDE SEQUENCE [LARGE SCALE MRNA]</scope>
    <source>
        <tissue>Eye</tissue>
    </source>
</reference>
<dbReference type="EMBL" id="BC084343">
    <property type="protein sequence ID" value="AAH84343.1"/>
    <property type="molecule type" value="mRNA"/>
</dbReference>
<dbReference type="RefSeq" id="NP_001088307.1">
    <property type="nucleotide sequence ID" value="NM_001094838.1"/>
</dbReference>
<dbReference type="SMR" id="Q5XGT8"/>
<dbReference type="DNASU" id="495143"/>
<dbReference type="GeneID" id="495143"/>
<dbReference type="KEGG" id="xla:495143"/>
<dbReference type="AGR" id="Xenbase:XB-GENE-1216193"/>
<dbReference type="CTD" id="495143"/>
<dbReference type="Xenbase" id="XB-GENE-1216193">
    <property type="gene designation" value="sp8.L"/>
</dbReference>
<dbReference type="OMA" id="XXIKEEL"/>
<dbReference type="OrthoDB" id="6365676at2759"/>
<dbReference type="Proteomes" id="UP000186698">
    <property type="component" value="Chromosome 6L"/>
</dbReference>
<dbReference type="Bgee" id="495143">
    <property type="expression patterns" value="Expressed in brain and 4 other cell types or tissues"/>
</dbReference>
<dbReference type="GO" id="GO:0005634">
    <property type="term" value="C:nucleus"/>
    <property type="evidence" value="ECO:0007669"/>
    <property type="project" value="UniProtKB-SubCell"/>
</dbReference>
<dbReference type="GO" id="GO:0000981">
    <property type="term" value="F:DNA-binding transcription factor activity, RNA polymerase II-specific"/>
    <property type="evidence" value="ECO:0000318"/>
    <property type="project" value="GO_Central"/>
</dbReference>
<dbReference type="GO" id="GO:0000978">
    <property type="term" value="F:RNA polymerase II cis-regulatory region sequence-specific DNA binding"/>
    <property type="evidence" value="ECO:0000318"/>
    <property type="project" value="GO_Central"/>
</dbReference>
<dbReference type="GO" id="GO:0008270">
    <property type="term" value="F:zinc ion binding"/>
    <property type="evidence" value="ECO:0007669"/>
    <property type="project" value="UniProtKB-KW"/>
</dbReference>
<dbReference type="GO" id="GO:0006357">
    <property type="term" value="P:regulation of transcription by RNA polymerase II"/>
    <property type="evidence" value="ECO:0000318"/>
    <property type="project" value="GO_Central"/>
</dbReference>
<dbReference type="CDD" id="cd22538">
    <property type="entry name" value="SP8_N"/>
    <property type="match status" value="1"/>
</dbReference>
<dbReference type="FunFam" id="3.30.160.60:FF:000077">
    <property type="entry name" value="Sp8 transcription factor"/>
    <property type="match status" value="1"/>
</dbReference>
<dbReference type="FunFam" id="3.30.160.60:FF:000014">
    <property type="entry name" value="Transcription factor Sp3"/>
    <property type="match status" value="1"/>
</dbReference>
<dbReference type="FunFam" id="3.30.160.60:FF:000026">
    <property type="entry name" value="Transcription factor Sp3"/>
    <property type="match status" value="1"/>
</dbReference>
<dbReference type="Gene3D" id="3.30.160.60">
    <property type="entry name" value="Classic Zinc Finger"/>
    <property type="match status" value="3"/>
</dbReference>
<dbReference type="InterPro" id="IPR036236">
    <property type="entry name" value="Znf_C2H2_sf"/>
</dbReference>
<dbReference type="InterPro" id="IPR013087">
    <property type="entry name" value="Znf_C2H2_type"/>
</dbReference>
<dbReference type="PANTHER" id="PTHR23235">
    <property type="entry name" value="KRUEPPEL-LIKE TRANSCRIPTION FACTOR"/>
    <property type="match status" value="1"/>
</dbReference>
<dbReference type="PANTHER" id="PTHR23235:SF25">
    <property type="entry name" value="TRANSCRIPTION FACTOR SP8"/>
    <property type="match status" value="1"/>
</dbReference>
<dbReference type="Pfam" id="PF00096">
    <property type="entry name" value="zf-C2H2"/>
    <property type="match status" value="3"/>
</dbReference>
<dbReference type="SMART" id="SM00355">
    <property type="entry name" value="ZnF_C2H2"/>
    <property type="match status" value="3"/>
</dbReference>
<dbReference type="SUPFAM" id="SSF57667">
    <property type="entry name" value="beta-beta-alpha zinc fingers"/>
    <property type="match status" value="2"/>
</dbReference>
<dbReference type="PROSITE" id="PS00028">
    <property type="entry name" value="ZINC_FINGER_C2H2_1"/>
    <property type="match status" value="3"/>
</dbReference>
<dbReference type="PROSITE" id="PS50157">
    <property type="entry name" value="ZINC_FINGER_C2H2_2"/>
    <property type="match status" value="3"/>
</dbReference>
<protein>
    <recommendedName>
        <fullName>Transcription factor Sp8</fullName>
    </recommendedName>
</protein>
<gene>
    <name type="primary">sp8</name>
</gene>